<feature type="peptide" id="PRO_0000398561" description="Jingzhaotoxin F6-27.63">
    <location>
        <begin position="1"/>
        <end position="35"/>
    </location>
</feature>
<feature type="disulfide bond" evidence="1">
    <location>
        <begin position="2"/>
        <end position="17"/>
    </location>
</feature>
<feature type="disulfide bond" evidence="1">
    <location>
        <begin position="9"/>
        <end position="22"/>
    </location>
</feature>
<feature type="disulfide bond" evidence="1">
    <location>
        <begin position="16"/>
        <end position="29"/>
    </location>
</feature>
<proteinExistence type="evidence at protein level"/>
<evidence type="ECO:0000250" key="1"/>
<evidence type="ECO:0000269" key="2">
    <source>
    </source>
</evidence>
<evidence type="ECO:0000305" key="3"/>
<dbReference type="GO" id="GO:0005576">
    <property type="term" value="C:extracellular region"/>
    <property type="evidence" value="ECO:0007669"/>
    <property type="project" value="UniProtKB-SubCell"/>
</dbReference>
<dbReference type="GO" id="GO:0008200">
    <property type="term" value="F:ion channel inhibitor activity"/>
    <property type="evidence" value="ECO:0007669"/>
    <property type="project" value="InterPro"/>
</dbReference>
<dbReference type="GO" id="GO:0090729">
    <property type="term" value="F:toxin activity"/>
    <property type="evidence" value="ECO:0007669"/>
    <property type="project" value="UniProtKB-KW"/>
</dbReference>
<dbReference type="InterPro" id="IPR011696">
    <property type="entry name" value="Huwentoxin-1"/>
</dbReference>
<dbReference type="Pfam" id="PF07740">
    <property type="entry name" value="Toxin_12"/>
    <property type="match status" value="1"/>
</dbReference>
<dbReference type="SUPFAM" id="SSF57059">
    <property type="entry name" value="omega toxin-like"/>
    <property type="match status" value="1"/>
</dbReference>
<reference key="1">
    <citation type="journal article" date="2007" name="Proteomics">
        <title>Proteomic and peptidomic analysis of the venom from Chinese tarantula Chilobrachys jingzhao.</title>
        <authorList>
            <person name="Liao Z."/>
            <person name="Cao J."/>
            <person name="Li S."/>
            <person name="Yan X."/>
            <person name="Hu W."/>
            <person name="He Q."/>
            <person name="Chen J."/>
            <person name="Tang J."/>
            <person name="Xie J."/>
            <person name="Liang S."/>
        </authorList>
    </citation>
    <scope>PROTEIN SEQUENCE</scope>
    <scope>MASS SPECTROMETRY</scope>
    <source>
        <tissue>Venom</tissue>
    </source>
</reference>
<comment type="function">
    <text>Probable ion channel inhibitor.</text>
</comment>
<comment type="subcellular location">
    <subcellularLocation>
        <location>Secreted</location>
    </subcellularLocation>
</comment>
<comment type="tissue specificity">
    <text>Expressed by the venom gland.</text>
</comment>
<comment type="domain">
    <text evidence="1">The presence of a 'disulfide through disulfide knot' structurally defines this protein as a knottin.</text>
</comment>
<comment type="mass spectrometry" mass="4272.0" method="MALDI" evidence="2">
    <text>Monoisotopic mass.</text>
</comment>
<comment type="similarity">
    <text evidence="3">Belongs to the neurotoxin 10 (Hwtx-1) family. 49 (Jztx-F6) subfamily.</text>
</comment>
<protein>
    <recommendedName>
        <fullName>Jingzhaotoxin F6-27.63</fullName>
    </recommendedName>
    <alternativeName>
        <fullName>Peptide F6-27.63</fullName>
    </alternativeName>
</protein>
<organism>
    <name type="scientific">Chilobrachys guangxiensis</name>
    <name type="common">Chinese earth tiger tarantula</name>
    <name type="synonym">Chilobrachys jingzhao</name>
    <dbReference type="NCBI Taxonomy" id="278060"/>
    <lineage>
        <taxon>Eukaryota</taxon>
        <taxon>Metazoa</taxon>
        <taxon>Ecdysozoa</taxon>
        <taxon>Arthropoda</taxon>
        <taxon>Chelicerata</taxon>
        <taxon>Arachnida</taxon>
        <taxon>Araneae</taxon>
        <taxon>Mygalomorphae</taxon>
        <taxon>Theraphosidae</taxon>
        <taxon>Chilobrachys</taxon>
    </lineage>
</organism>
<sequence length="35" mass="4278">ACQGYMRKCGRDKPPCCKKLECSKTWRWCVWNPWE</sequence>
<keyword id="KW-0903">Direct protein sequencing</keyword>
<keyword id="KW-1015">Disulfide bond</keyword>
<keyword id="KW-0872">Ion channel impairing toxin</keyword>
<keyword id="KW-0960">Knottin</keyword>
<keyword id="KW-0964">Secreted</keyword>
<keyword id="KW-0800">Toxin</keyword>
<name>JZ627_CHIGU</name>
<accession>P0CH52</accession>